<sequence length="143" mass="15279">MSLTAKDKTLVKTFWGKVKGKADAMGAEALGRMLVVYPQTKTYFAHWSDQSPGSEPVKHGKKTIMGAVGDAVGKIDNLLGGLSALSEVHATKLAIDPGNFKLLSHCLLVTFAVNYPTDFTAEVHVAVDKFLAAVSAALADKYR</sequence>
<feature type="initiator methionine" description="Removed" evidence="3">
    <location>
        <position position="1"/>
    </location>
</feature>
<feature type="chain" id="PRO_0000052606" description="Hemoglobin cathodic subunit alpha">
    <location>
        <begin position="2"/>
        <end position="143"/>
    </location>
</feature>
<feature type="domain" description="Globin" evidence="2">
    <location>
        <begin position="2"/>
        <end position="143"/>
    </location>
</feature>
<feature type="binding site">
    <location>
        <position position="59"/>
    </location>
    <ligand>
        <name>O2</name>
        <dbReference type="ChEBI" id="CHEBI:15379"/>
    </ligand>
</feature>
<feature type="binding site" description="proximal binding residue">
    <location>
        <position position="89"/>
    </location>
    <ligand>
        <name>heme b</name>
        <dbReference type="ChEBI" id="CHEBI:60344"/>
    </ligand>
    <ligandPart>
        <name>Fe</name>
        <dbReference type="ChEBI" id="CHEBI:18248"/>
    </ligandPart>
</feature>
<feature type="modified residue" description="N-acetylserine" evidence="3">
    <location>
        <position position="2"/>
    </location>
</feature>
<proteinExistence type="evidence at protein level"/>
<accession>P83479</accession>
<keyword id="KW-0007">Acetylation</keyword>
<keyword id="KW-0903">Direct protein sequencing</keyword>
<keyword id="KW-0349">Heme</keyword>
<keyword id="KW-0408">Iron</keyword>
<keyword id="KW-0479">Metal-binding</keyword>
<keyword id="KW-0561">Oxygen transport</keyword>
<keyword id="KW-0813">Transport</keyword>
<evidence type="ECO:0000250" key="1"/>
<evidence type="ECO:0000255" key="2">
    <source>
        <dbReference type="PROSITE-ProRule" id="PRU00238"/>
    </source>
</evidence>
<evidence type="ECO:0000269" key="3">
    <source>
    </source>
</evidence>
<dbReference type="SMR" id="P83479"/>
<dbReference type="iPTMnet" id="P83479"/>
<dbReference type="GO" id="GO:0072562">
    <property type="term" value="C:blood microparticle"/>
    <property type="evidence" value="ECO:0007669"/>
    <property type="project" value="TreeGrafter"/>
</dbReference>
<dbReference type="GO" id="GO:0031838">
    <property type="term" value="C:haptoglobin-hemoglobin complex"/>
    <property type="evidence" value="ECO:0007669"/>
    <property type="project" value="TreeGrafter"/>
</dbReference>
<dbReference type="GO" id="GO:0005833">
    <property type="term" value="C:hemoglobin complex"/>
    <property type="evidence" value="ECO:0007669"/>
    <property type="project" value="InterPro"/>
</dbReference>
<dbReference type="GO" id="GO:0031720">
    <property type="term" value="F:haptoglobin binding"/>
    <property type="evidence" value="ECO:0007669"/>
    <property type="project" value="TreeGrafter"/>
</dbReference>
<dbReference type="GO" id="GO:0020037">
    <property type="term" value="F:heme binding"/>
    <property type="evidence" value="ECO:0007669"/>
    <property type="project" value="InterPro"/>
</dbReference>
<dbReference type="GO" id="GO:0005506">
    <property type="term" value="F:iron ion binding"/>
    <property type="evidence" value="ECO:0007669"/>
    <property type="project" value="InterPro"/>
</dbReference>
<dbReference type="GO" id="GO:0043177">
    <property type="term" value="F:organic acid binding"/>
    <property type="evidence" value="ECO:0007669"/>
    <property type="project" value="TreeGrafter"/>
</dbReference>
<dbReference type="GO" id="GO:0019825">
    <property type="term" value="F:oxygen binding"/>
    <property type="evidence" value="ECO:0007669"/>
    <property type="project" value="InterPro"/>
</dbReference>
<dbReference type="GO" id="GO:0005344">
    <property type="term" value="F:oxygen carrier activity"/>
    <property type="evidence" value="ECO:0007669"/>
    <property type="project" value="UniProtKB-KW"/>
</dbReference>
<dbReference type="GO" id="GO:0004601">
    <property type="term" value="F:peroxidase activity"/>
    <property type="evidence" value="ECO:0007669"/>
    <property type="project" value="TreeGrafter"/>
</dbReference>
<dbReference type="GO" id="GO:0042744">
    <property type="term" value="P:hydrogen peroxide catabolic process"/>
    <property type="evidence" value="ECO:0007669"/>
    <property type="project" value="TreeGrafter"/>
</dbReference>
<dbReference type="CDD" id="cd08927">
    <property type="entry name" value="Hb-alpha-like"/>
    <property type="match status" value="1"/>
</dbReference>
<dbReference type="FunFam" id="1.10.490.10:FF:000002">
    <property type="entry name" value="Hemoglobin subunit alpha"/>
    <property type="match status" value="1"/>
</dbReference>
<dbReference type="Gene3D" id="1.10.490.10">
    <property type="entry name" value="Globins"/>
    <property type="match status" value="1"/>
</dbReference>
<dbReference type="InterPro" id="IPR000971">
    <property type="entry name" value="Globin"/>
</dbReference>
<dbReference type="InterPro" id="IPR009050">
    <property type="entry name" value="Globin-like_sf"/>
</dbReference>
<dbReference type="InterPro" id="IPR012292">
    <property type="entry name" value="Globin/Proto"/>
</dbReference>
<dbReference type="InterPro" id="IPR002338">
    <property type="entry name" value="Hemoglobin_a-typ"/>
</dbReference>
<dbReference type="InterPro" id="IPR050056">
    <property type="entry name" value="Hemoglobin_oxygen_transport"/>
</dbReference>
<dbReference type="InterPro" id="IPR002339">
    <property type="entry name" value="Hemoglobin_pi"/>
</dbReference>
<dbReference type="PANTHER" id="PTHR11442:SF91">
    <property type="entry name" value="EMBRYONIC ALPHA GLOBIN E1-RELATED"/>
    <property type="match status" value="1"/>
</dbReference>
<dbReference type="PANTHER" id="PTHR11442">
    <property type="entry name" value="HEMOGLOBIN FAMILY MEMBER"/>
    <property type="match status" value="1"/>
</dbReference>
<dbReference type="Pfam" id="PF00042">
    <property type="entry name" value="Globin"/>
    <property type="match status" value="1"/>
</dbReference>
<dbReference type="PRINTS" id="PR00612">
    <property type="entry name" value="ALPHAHAEM"/>
</dbReference>
<dbReference type="PRINTS" id="PR00815">
    <property type="entry name" value="PIHAEM"/>
</dbReference>
<dbReference type="SUPFAM" id="SSF46458">
    <property type="entry name" value="Globin-like"/>
    <property type="match status" value="1"/>
</dbReference>
<dbReference type="PROSITE" id="PS01033">
    <property type="entry name" value="GLOBIN"/>
    <property type="match status" value="1"/>
</dbReference>
<comment type="function">
    <text>Involved in oxygen transport from the gills to the various peripheral tissues.</text>
</comment>
<comment type="subunit">
    <text evidence="1">Heterotetramer of two alpha chains and two beta chains.</text>
</comment>
<comment type="tissue specificity">
    <text evidence="3">Red blood cells.</text>
</comment>
<comment type="mass spectrometry" mass="15300.0" method="MALDI" evidence="3"/>
<comment type="miscellaneous">
    <text>This fish has two types of hemoglobin: one cathodic Hb and two major anodic Hbs. The cathodic Hb displays a small normal Bohr effect and a reverse Bohr effect in the presence and absence of phosphate respectively. In addition, the cathodic HB displays a large phosphate effect.</text>
</comment>
<comment type="similarity">
    <text evidence="2">Belongs to the globin family.</text>
</comment>
<reference key="1">
    <citation type="journal article" date="2003" name="Biochem. J.">
        <title>Structural-functional characterization of the cathodic haemoglobin of the conger eel Conger conger: molecular modelling study of an additional phosphate-binding site.</title>
        <authorList>
            <person name="Pellegrini M."/>
            <person name="Giardina B."/>
            <person name="Verde C."/>
            <person name="Carratore V."/>
            <person name="Olianas A."/>
            <person name="Sollai L."/>
            <person name="Sanna M.T."/>
            <person name="Castagnola M."/>
            <person name="Di Prisco G."/>
        </authorList>
    </citation>
    <scope>PROTEIN SEQUENCE OF 2-143</scope>
    <scope>TISSUE SPECIFICITY</scope>
    <scope>MASS SPECTROMETRY</scope>
    <scope>ACETYLATION AT SER-2</scope>
    <source>
        <tissue>Erythrocyte</tissue>
    </source>
</reference>
<name>HBAC_CONCO</name>
<protein>
    <recommendedName>
        <fullName>Hemoglobin cathodic subunit alpha</fullName>
    </recommendedName>
    <alternativeName>
        <fullName>Hemoglobin cathodic alpha chain</fullName>
    </alternativeName>
</protein>
<organism>
    <name type="scientific">Conger conger</name>
    <name type="common">Conger eel</name>
    <name type="synonym">Muraena conger</name>
    <dbReference type="NCBI Taxonomy" id="82655"/>
    <lineage>
        <taxon>Eukaryota</taxon>
        <taxon>Metazoa</taxon>
        <taxon>Chordata</taxon>
        <taxon>Craniata</taxon>
        <taxon>Vertebrata</taxon>
        <taxon>Euteleostomi</taxon>
        <taxon>Actinopterygii</taxon>
        <taxon>Neopterygii</taxon>
        <taxon>Teleostei</taxon>
        <taxon>Anguilliformes</taxon>
        <taxon>Congridae</taxon>
        <taxon>Conger</taxon>
    </lineage>
</organism>